<feature type="chain" id="PRO_0000312747" description="DNA-dependent metalloprotease SPRTN">
    <location>
        <begin position="1"/>
        <end position="487"/>
    </location>
</feature>
<feature type="domain" description="SprT-like" evidence="3">
    <location>
        <begin position="45"/>
        <end position="212"/>
    </location>
</feature>
<feature type="zinc finger region" description="UBZ4-type" evidence="4">
    <location>
        <begin position="455"/>
        <end position="482"/>
    </location>
</feature>
<feature type="region of interest" description="Disordered" evidence="6">
    <location>
        <begin position="219"/>
        <end position="248"/>
    </location>
</feature>
<feature type="region of interest" description="Disordered" evidence="6">
    <location>
        <begin position="280"/>
        <end position="317"/>
    </location>
</feature>
<feature type="region of interest" description="Disordered" evidence="6">
    <location>
        <begin position="347"/>
        <end position="379"/>
    </location>
</feature>
<feature type="region of interest" description="Disordered" evidence="6">
    <location>
        <begin position="427"/>
        <end position="455"/>
    </location>
</feature>
<feature type="short sequence motif" description="SHP-box" evidence="2">
    <location>
        <begin position="253"/>
        <end position="261"/>
    </location>
</feature>
<feature type="short sequence motif" description="PIP-box" evidence="2">
    <location>
        <begin position="324"/>
        <end position="331"/>
    </location>
</feature>
<feature type="short sequence motif" description="Nuclear localization signal" evidence="2">
    <location>
        <begin position="401"/>
        <end position="412"/>
    </location>
</feature>
<feature type="compositionally biased region" description="Basic residues" evidence="6">
    <location>
        <begin position="220"/>
        <end position="230"/>
    </location>
</feature>
<feature type="compositionally biased region" description="Basic and acidic residues" evidence="6">
    <location>
        <begin position="236"/>
        <end position="247"/>
    </location>
</feature>
<feature type="compositionally biased region" description="Polar residues" evidence="6">
    <location>
        <begin position="280"/>
        <end position="289"/>
    </location>
</feature>
<feature type="compositionally biased region" description="Polar residues" evidence="6">
    <location>
        <begin position="306"/>
        <end position="317"/>
    </location>
</feature>
<feature type="compositionally biased region" description="Low complexity" evidence="6">
    <location>
        <begin position="435"/>
        <end position="453"/>
    </location>
</feature>
<feature type="active site" evidence="2 5">
    <location>
        <position position="112"/>
    </location>
</feature>
<feature type="binding site" evidence="2 5">
    <location>
        <position position="111"/>
    </location>
    <ligand>
        <name>Zn(2+)</name>
        <dbReference type="ChEBI" id="CHEBI:29105"/>
        <label>1</label>
        <note>catalytic</note>
    </ligand>
</feature>
<feature type="binding site" evidence="2 5">
    <location>
        <position position="115"/>
    </location>
    <ligand>
        <name>Zn(2+)</name>
        <dbReference type="ChEBI" id="CHEBI:29105"/>
        <label>1</label>
        <note>catalytic</note>
    </ligand>
</feature>
<feature type="binding site" evidence="2">
    <location>
        <position position="130"/>
    </location>
    <ligand>
        <name>Zn(2+)</name>
        <dbReference type="ChEBI" id="CHEBI:29105"/>
        <label>1</label>
        <note>catalytic</note>
    </ligand>
</feature>
<feature type="binding site" evidence="4">
    <location>
        <position position="458"/>
    </location>
    <ligand>
        <name>Zn(2+)</name>
        <dbReference type="ChEBI" id="CHEBI:29105"/>
        <label>2</label>
    </ligand>
</feature>
<feature type="binding site" evidence="4">
    <location>
        <position position="461"/>
    </location>
    <ligand>
        <name>Zn(2+)</name>
        <dbReference type="ChEBI" id="CHEBI:29105"/>
        <label>2</label>
    </ligand>
</feature>
<feature type="binding site" evidence="4">
    <location>
        <position position="473"/>
    </location>
    <ligand>
        <name>Zn(2+)</name>
        <dbReference type="ChEBI" id="CHEBI:29105"/>
        <label>2</label>
    </ligand>
</feature>
<feature type="binding site" evidence="4">
    <location>
        <position position="477"/>
    </location>
    <ligand>
        <name>Zn(2+)</name>
        <dbReference type="ChEBI" id="CHEBI:29105"/>
        <label>2</label>
    </ligand>
</feature>
<feature type="site" description="Cleavage; by autolysis" evidence="2">
    <location>
        <begin position="227"/>
        <end position="228"/>
    </location>
</feature>
<feature type="modified residue" description="N-acetylmethionine" evidence="2">
    <location>
        <position position="1"/>
    </location>
</feature>
<feature type="modified residue" description="N6-acetyllysine" evidence="2">
    <location>
        <position position="230"/>
    </location>
</feature>
<feature type="modified residue" description="Phosphoserine" evidence="2">
    <location>
        <position position="267"/>
    </location>
</feature>
<feature type="modified residue" description="Phosphoserine" evidence="2">
    <location>
        <position position="373"/>
    </location>
</feature>
<feature type="cross-link" description="Glycyl lysine isopeptide (Lys-Gly) (interchain with G-Cter in SUMO2)" evidence="2">
    <location>
        <position position="302"/>
    </location>
</feature>
<feature type="cross-link" description="Glycyl lysine isopeptide (Lys-Gly) (interchain with G-Cter in SUMO2); alternate" evidence="2">
    <location>
        <position position="340"/>
    </location>
</feature>
<feature type="cross-link" description="Glycyl lysine isopeptide (Lys-Gly) (interchain with G-Cter in ubiquitin); alternate" evidence="2">
    <location>
        <position position="340"/>
    </location>
</feature>
<feature type="cross-link" description="Glycyl lysine isopeptide (Lys-Gly) (interchain with G-Cter in ubiquitin)" evidence="2">
    <location>
        <position position="413"/>
    </location>
</feature>
<feature type="cross-link" description="Glycyl lysine isopeptide (Lys-Gly) (interchain with G-Cter in SUMO2)" evidence="2">
    <location>
        <position position="422"/>
    </location>
</feature>
<feature type="cross-link" description="Glycyl lysine isopeptide (Lys-Gly) (interchain with G-Cter in SUMO2)" evidence="2">
    <location>
        <position position="423"/>
    </location>
</feature>
<feature type="cross-link" description="Glycyl lysine isopeptide (Lys-Gly) (interchain with G-Cter in SUMO2)" evidence="2">
    <location>
        <position position="486"/>
    </location>
</feature>
<accession>A5D979</accession>
<reference key="1">
    <citation type="journal article" date="2005" name="BMC Genomics">
        <title>Characterization of 954 bovine full-CDS cDNA sequences.</title>
        <authorList>
            <person name="Harhay G.P."/>
            <person name="Sonstegard T.S."/>
            <person name="Keele J.W."/>
            <person name="Heaton M.P."/>
            <person name="Clawson M.L."/>
            <person name="Snelling W.M."/>
            <person name="Wiedmann R.T."/>
            <person name="Van Tassell C.P."/>
            <person name="Smith T.P.L."/>
        </authorList>
    </citation>
    <scope>NUCLEOTIDE SEQUENCE [LARGE SCALE MRNA]</scope>
</reference>
<organism>
    <name type="scientific">Bos taurus</name>
    <name type="common">Bovine</name>
    <dbReference type="NCBI Taxonomy" id="9913"/>
    <lineage>
        <taxon>Eukaryota</taxon>
        <taxon>Metazoa</taxon>
        <taxon>Chordata</taxon>
        <taxon>Craniata</taxon>
        <taxon>Vertebrata</taxon>
        <taxon>Euteleostomi</taxon>
        <taxon>Mammalia</taxon>
        <taxon>Eutheria</taxon>
        <taxon>Laurasiatheria</taxon>
        <taxon>Artiodactyla</taxon>
        <taxon>Ruminantia</taxon>
        <taxon>Pecora</taxon>
        <taxon>Bovidae</taxon>
        <taxon>Bovinae</taxon>
        <taxon>Bos</taxon>
    </lineage>
</organism>
<comment type="function">
    <text evidence="1 2">DNA-dependent metalloendopeptidase that mediates the proteolytic cleavage of covalent DNA-protein cross-links (DPCs) during DNA synthesis, thereby playing a key role in maintaining genomic integrity. DPCs are highly toxic DNA lesions that interfere with essential chromatin transactions, such as replication and transcription, and which are induced by reactive agents, such as UV light or formaldehyde. Associates with the DNA replication machinery and specifically removes DPCs during DNA synthesis. Catalyzes proteolytic cleavage of the HMCES DNA-protein cross-link following unfolding by the BRIP1/FANCJ helicase. Acts as a pleiotropic protease for DNA-binding proteins cross-linked with DNA, such as TOP1, TOP2A, histones H3 and H4. Mediates degradation of DPCs that are not ubiquitinated, while it is not able to degrade ubiquitinated DPCs. SPRTN activation requires polymerase collision with DPCs followed by helicase bypass of DPCs. Involved in recruitment of VCP/p97 to sites of DNA damage. Also acts as an activator of CHEK1 during normal DNA replication by mediating proteolytic cleavage of CHEK1, thereby promoting CHEK1 removal from chromatin and subsequent activation. Does not activate CHEK1 in response to DNA damage. May also act as a 'reader' of ubiquitinated PCNA: recruited to sites of UV damage and interacts with ubiquitinated PCNA and RAD18, the E3 ubiquitin ligase that monoubiquitinates PCNA. Facilitates chromatin association of RAD18 and is required for efficient PCNA monoubiquitination, promoting a feed-forward loop to enhance PCNA ubiquitination and translesion DNA synthesis.</text>
</comment>
<comment type="cofactor">
    <cofactor evidence="2">
        <name>Zn(2+)</name>
        <dbReference type="ChEBI" id="CHEBI:29105"/>
    </cofactor>
</comment>
<comment type="activity regulation">
    <text evidence="2">DNA-binding activates the protease activity: single-stranded DNA-binding specifically activates ability to cleave covalent DNA-protein cross-links (DPCs). In contrast, double-stranded DNA-binding specifically activates autocatalytic cleavage, and subsequent inactivation.</text>
</comment>
<comment type="subunit">
    <text evidence="2">Homodimer. Interacts (VIA PIP-box) with PCNA (when ubiquitinated). Interacts (via its SHP-box) with VCP/p97. Interacts with RAD18. Interacts with KCTD13 and POLD3.</text>
</comment>
<comment type="subcellular location">
    <subcellularLocation>
        <location evidence="2">Nucleus</location>
    </subcellularLocation>
    <subcellularLocation>
        <location evidence="2">Chromosome</location>
    </subcellularLocation>
    <text evidence="2">Localizes to sites of UV damage via the PIP-box. Recruited to stalled replication forks at sites of replication stress following deubiquitination. CHEK1 stimulates recruitment to chromatin.</text>
</comment>
<comment type="domain">
    <text evidence="2">The PIP-box mediates the interaction with PCNA, while the UBZ4-type zinc finger mediates binding to 'Lys-48'- and 'Lys-63'-linked polyubiquitin.</text>
</comment>
<comment type="PTM">
    <text evidence="2">Autocatalytically cleaved in response to double-stranded DNA-binding: autocatalytic cleavage takes place in trans and leads to inactivation.</text>
</comment>
<comment type="PTM">
    <text evidence="2">Monoubiquitinated; monoubiquitination promotes exclusion from chromatin. Deubiquitinated by VCPIP1: deubiquitination is required for subsequent acetylation and recruitment to chromatin and DNA damage sites.</text>
</comment>
<comment type="PTM">
    <text evidence="2">Acetylated following deubiquitination by VCPIP1, leading to recruitment to chromatin and DNA damage sites.</text>
</comment>
<comment type="PTM">
    <text evidence="2">Phosphorylation by CHEK1 promotes recruitment to chromatin.</text>
</comment>
<comment type="similarity">
    <text evidence="7">Belongs to the Spartan family.</text>
</comment>
<name>SPRTN_BOVIN</name>
<dbReference type="EC" id="3.4.24.-" evidence="2"/>
<dbReference type="EMBL" id="BT030498">
    <property type="protein sequence ID" value="ABQ12938.1"/>
    <property type="molecule type" value="mRNA"/>
</dbReference>
<dbReference type="RefSeq" id="NP_001091551.1">
    <property type="nucleotide sequence ID" value="NM_001098082.1"/>
</dbReference>
<dbReference type="RefSeq" id="XP_015316420.1">
    <property type="nucleotide sequence ID" value="XM_015460934.3"/>
</dbReference>
<dbReference type="RefSeq" id="XP_015316421.1">
    <property type="nucleotide sequence ID" value="XM_015460935.3"/>
</dbReference>
<dbReference type="SMR" id="A5D979"/>
<dbReference type="FunCoup" id="A5D979">
    <property type="interactions" value="2581"/>
</dbReference>
<dbReference type="STRING" id="9913.ENSBTAP00000008030"/>
<dbReference type="PaxDb" id="9913-ENSBTAP00000008030"/>
<dbReference type="GeneID" id="534918"/>
<dbReference type="KEGG" id="bta:534918"/>
<dbReference type="CTD" id="83932"/>
<dbReference type="VEuPathDB" id="HostDB:ENSBTAG00000006112"/>
<dbReference type="eggNOG" id="KOG3931">
    <property type="taxonomic scope" value="Eukaryota"/>
</dbReference>
<dbReference type="HOGENOM" id="CLU_019426_2_0_1"/>
<dbReference type="InParanoid" id="A5D979"/>
<dbReference type="OMA" id="VCQTEVL"/>
<dbReference type="OrthoDB" id="5236983at2759"/>
<dbReference type="TreeFam" id="TF314762"/>
<dbReference type="Reactome" id="R-BTA-110320">
    <property type="pathway name" value="Translesion Synthesis by POLH"/>
</dbReference>
<dbReference type="Proteomes" id="UP000009136">
    <property type="component" value="Chromosome 28"/>
</dbReference>
<dbReference type="Bgee" id="ENSBTAG00000006112">
    <property type="expression patterns" value="Expressed in thymus and 106 other cell types or tissues"/>
</dbReference>
<dbReference type="GO" id="GO:0000785">
    <property type="term" value="C:chromatin"/>
    <property type="evidence" value="ECO:0000250"/>
    <property type="project" value="UniProtKB"/>
</dbReference>
<dbReference type="GO" id="GO:0016607">
    <property type="term" value="C:nuclear speck"/>
    <property type="evidence" value="ECO:0007669"/>
    <property type="project" value="Ensembl"/>
</dbReference>
<dbReference type="GO" id="GO:0005634">
    <property type="term" value="C:nucleus"/>
    <property type="evidence" value="ECO:0000250"/>
    <property type="project" value="UniProtKB"/>
</dbReference>
<dbReference type="GO" id="GO:0003690">
    <property type="term" value="F:double-stranded DNA binding"/>
    <property type="evidence" value="ECO:0000250"/>
    <property type="project" value="UniProtKB"/>
</dbReference>
<dbReference type="GO" id="GO:0070530">
    <property type="term" value="F:K63-linked polyubiquitin modification-dependent protein binding"/>
    <property type="evidence" value="ECO:0000250"/>
    <property type="project" value="UniProtKB"/>
</dbReference>
<dbReference type="GO" id="GO:0004222">
    <property type="term" value="F:metalloendopeptidase activity"/>
    <property type="evidence" value="ECO:0000250"/>
    <property type="project" value="UniProtKB"/>
</dbReference>
<dbReference type="GO" id="GO:0004478">
    <property type="term" value="F:methionine adenosyltransferase activity"/>
    <property type="evidence" value="ECO:0007669"/>
    <property type="project" value="InterPro"/>
</dbReference>
<dbReference type="GO" id="GO:0031593">
    <property type="term" value="F:polyubiquitin modification-dependent protein binding"/>
    <property type="evidence" value="ECO:0000318"/>
    <property type="project" value="GO_Central"/>
</dbReference>
<dbReference type="GO" id="GO:0003697">
    <property type="term" value="F:single-stranded DNA binding"/>
    <property type="evidence" value="ECO:0000250"/>
    <property type="project" value="UniProtKB"/>
</dbReference>
<dbReference type="GO" id="GO:0043130">
    <property type="term" value="F:ubiquitin binding"/>
    <property type="evidence" value="ECO:0000250"/>
    <property type="project" value="UniProtKB"/>
</dbReference>
<dbReference type="GO" id="GO:0008270">
    <property type="term" value="F:zinc ion binding"/>
    <property type="evidence" value="ECO:0007669"/>
    <property type="project" value="UniProtKB-KW"/>
</dbReference>
<dbReference type="GO" id="GO:0006974">
    <property type="term" value="P:DNA damage response"/>
    <property type="evidence" value="ECO:0000250"/>
    <property type="project" value="UniProtKB"/>
</dbReference>
<dbReference type="GO" id="GO:0036297">
    <property type="term" value="P:interstrand cross-link repair"/>
    <property type="evidence" value="ECO:0007669"/>
    <property type="project" value="Ensembl"/>
</dbReference>
<dbReference type="GO" id="GO:0031398">
    <property type="term" value="P:positive regulation of protein ubiquitination"/>
    <property type="evidence" value="ECO:0000250"/>
    <property type="project" value="UniProtKB"/>
</dbReference>
<dbReference type="GO" id="GO:0016540">
    <property type="term" value="P:protein autoprocessing"/>
    <property type="evidence" value="ECO:0000250"/>
    <property type="project" value="UniProtKB"/>
</dbReference>
<dbReference type="GO" id="GO:0106300">
    <property type="term" value="P:protein-DNA covalent cross-linking repair"/>
    <property type="evidence" value="ECO:0000250"/>
    <property type="project" value="UniProtKB"/>
</dbReference>
<dbReference type="GO" id="GO:0006508">
    <property type="term" value="P:proteolysis"/>
    <property type="evidence" value="ECO:0000250"/>
    <property type="project" value="UniProtKB"/>
</dbReference>
<dbReference type="GO" id="GO:0009411">
    <property type="term" value="P:response to UV"/>
    <property type="evidence" value="ECO:0000250"/>
    <property type="project" value="UniProtKB"/>
</dbReference>
<dbReference type="GO" id="GO:0006556">
    <property type="term" value="P:S-adenosylmethionine biosynthetic process"/>
    <property type="evidence" value="ECO:0007669"/>
    <property type="project" value="InterPro"/>
</dbReference>
<dbReference type="GO" id="GO:0019985">
    <property type="term" value="P:translesion synthesis"/>
    <property type="evidence" value="ECO:0000250"/>
    <property type="project" value="UniProtKB"/>
</dbReference>
<dbReference type="FunFam" id="3.30.160.60:FF:000331">
    <property type="entry name" value="E3 ubiquitin-protein ligase RAD18"/>
    <property type="match status" value="1"/>
</dbReference>
<dbReference type="Gene3D" id="3.30.160.60">
    <property type="entry name" value="Classic Zinc Finger"/>
    <property type="match status" value="1"/>
</dbReference>
<dbReference type="InterPro" id="IPR006642">
    <property type="entry name" value="Rad18_UBZ4"/>
</dbReference>
<dbReference type="InterPro" id="IPR022636">
    <property type="entry name" value="S-AdoMet_synthetase_sfam"/>
</dbReference>
<dbReference type="InterPro" id="IPR044245">
    <property type="entry name" value="Spartan"/>
</dbReference>
<dbReference type="InterPro" id="IPR006640">
    <property type="entry name" value="SprT-like_domain"/>
</dbReference>
<dbReference type="InterPro" id="IPR055220">
    <property type="entry name" value="SPRTN_ZBD"/>
</dbReference>
<dbReference type="PANTHER" id="PTHR21220">
    <property type="entry name" value="DNA-DEPENDENT METALLOPROTEASE SPRTN"/>
    <property type="match status" value="1"/>
</dbReference>
<dbReference type="PANTHER" id="PTHR21220:SF0">
    <property type="entry name" value="DNA-DEPENDENT METALLOPROTEASE SPRTN"/>
    <property type="match status" value="1"/>
</dbReference>
<dbReference type="Pfam" id="PF10263">
    <property type="entry name" value="SprT-like"/>
    <property type="match status" value="1"/>
</dbReference>
<dbReference type="Pfam" id="PF22934">
    <property type="entry name" value="SPRTN_ZBD"/>
    <property type="match status" value="1"/>
</dbReference>
<dbReference type="SMART" id="SM00731">
    <property type="entry name" value="SprT"/>
    <property type="match status" value="1"/>
</dbReference>
<dbReference type="SMART" id="SM00734">
    <property type="entry name" value="ZnF_Rad18"/>
    <property type="match status" value="1"/>
</dbReference>
<dbReference type="SUPFAM" id="SSF55973">
    <property type="entry name" value="S-adenosylmethionine synthetase"/>
    <property type="match status" value="1"/>
</dbReference>
<dbReference type="PROSITE" id="PS51908">
    <property type="entry name" value="ZF_UBZ4"/>
    <property type="match status" value="1"/>
</dbReference>
<dbReference type="PROSITE" id="PS00142">
    <property type="entry name" value="ZINC_PROTEASE"/>
    <property type="match status" value="1"/>
</dbReference>
<keyword id="KW-0007">Acetylation</keyword>
<keyword id="KW-0068">Autocatalytic cleavage</keyword>
<keyword id="KW-0158">Chromosome</keyword>
<keyword id="KW-0227">DNA damage</keyword>
<keyword id="KW-0234">DNA repair</keyword>
<keyword id="KW-0378">Hydrolase</keyword>
<keyword id="KW-1017">Isopeptide bond</keyword>
<keyword id="KW-0479">Metal-binding</keyword>
<keyword id="KW-0482">Metalloprotease</keyword>
<keyword id="KW-0539">Nucleus</keyword>
<keyword id="KW-0597">Phosphoprotein</keyword>
<keyword id="KW-0645">Protease</keyword>
<keyword id="KW-1185">Reference proteome</keyword>
<keyword id="KW-0832">Ubl conjugation</keyword>
<keyword id="KW-0862">Zinc</keyword>
<keyword id="KW-0863">Zinc-finger</keyword>
<proteinExistence type="evidence at transcript level"/>
<sequence length="487" mass="54521">MDEDLVLALQLQEEWNLQVSEREPAQEPLSLVDASWELVDPTPDLQGLFVLFNDRFFWGQLEAVEVKWSVRMTLCAGICSYEGRGGMCSIRLSEPLLKLRPRKDLVETLLHEMIHAYLFVTNNDKDREGHGPEFCKHMHRINRLTGANITVYHTFHDEVDEYRRHWWRCNGPCQNSKPYYGYVKRATNRAPSAHDYWWAEHQKTCGGTYIKIKEPENYSKKGKGKTKLRKQPVSEAENKDKPNRGEKQLLIPFTGKGYVLGETSNFSSGKCITSHAINESQEPLSQDHSANALRPHSKTEVKFEQNGPSKKTSVASPVLSTSHQNVLSNYFSKVSVASSKAFRSVSGSPVKSLTVGDSTTKSVSAGSQRRVTSSRTSLRNSLKAMESTYVTVPQDAGGPEGKLPSKRPRIEDKTFFDLFFIKKEQAQSGGGDVTSSSHPPAAAQSPSGASGQSRVVHCPVCQDEVSETQINEHLDWCLERDSTQVKS</sequence>
<protein>
    <recommendedName>
        <fullName evidence="7">DNA-dependent metalloprotease SPRTN</fullName>
        <ecNumber evidence="2">3.4.24.-</ecNumber>
    </recommendedName>
    <alternativeName>
        <fullName evidence="2">Protein with SprT-like domain at the N terminus</fullName>
        <shortName evidence="2">Spartan</shortName>
    </alternativeName>
</protein>
<evidence type="ECO:0000250" key="1">
    <source>
        <dbReference type="UniProtKB" id="A0A1L8G2K9"/>
    </source>
</evidence>
<evidence type="ECO:0000250" key="2">
    <source>
        <dbReference type="UniProtKB" id="Q9H040"/>
    </source>
</evidence>
<evidence type="ECO:0000255" key="3"/>
<evidence type="ECO:0000255" key="4">
    <source>
        <dbReference type="PROSITE-ProRule" id="PRU01256"/>
    </source>
</evidence>
<evidence type="ECO:0000255" key="5">
    <source>
        <dbReference type="PROSITE-ProRule" id="PRU10095"/>
    </source>
</evidence>
<evidence type="ECO:0000256" key="6">
    <source>
        <dbReference type="SAM" id="MobiDB-lite"/>
    </source>
</evidence>
<evidence type="ECO:0000305" key="7"/>
<gene>
    <name evidence="2" type="primary">SPRTN</name>
</gene>